<organism>
    <name type="scientific">Photorhabdus laumondii subsp. laumondii (strain DSM 15139 / CIP 105565 / TT01)</name>
    <name type="common">Photorhabdus luminescens subsp. laumondii</name>
    <dbReference type="NCBI Taxonomy" id="243265"/>
    <lineage>
        <taxon>Bacteria</taxon>
        <taxon>Pseudomonadati</taxon>
        <taxon>Pseudomonadota</taxon>
        <taxon>Gammaproteobacteria</taxon>
        <taxon>Enterobacterales</taxon>
        <taxon>Morganellaceae</taxon>
        <taxon>Photorhabdus</taxon>
    </lineage>
</organism>
<reference key="1">
    <citation type="journal article" date="2003" name="Nat. Biotechnol.">
        <title>The genome sequence of the entomopathogenic bacterium Photorhabdus luminescens.</title>
        <authorList>
            <person name="Duchaud E."/>
            <person name="Rusniok C."/>
            <person name="Frangeul L."/>
            <person name="Buchrieser C."/>
            <person name="Givaudan A."/>
            <person name="Taourit S."/>
            <person name="Bocs S."/>
            <person name="Boursaux-Eude C."/>
            <person name="Chandler M."/>
            <person name="Charles J.-F."/>
            <person name="Dassa E."/>
            <person name="Derose R."/>
            <person name="Derzelle S."/>
            <person name="Freyssinet G."/>
            <person name="Gaudriault S."/>
            <person name="Medigue C."/>
            <person name="Lanois A."/>
            <person name="Powell K."/>
            <person name="Siguier P."/>
            <person name="Vincent R."/>
            <person name="Wingate V."/>
            <person name="Zouine M."/>
            <person name="Glaser P."/>
            <person name="Boemare N."/>
            <person name="Danchin A."/>
            <person name="Kunst F."/>
        </authorList>
    </citation>
    <scope>NUCLEOTIDE SEQUENCE [LARGE SCALE GENOMIC DNA]</scope>
    <source>
        <strain>DSM 15139 / CIP 105565 / TT01</strain>
    </source>
</reference>
<accession>Q7N9S2</accession>
<evidence type="ECO:0000255" key="1">
    <source>
        <dbReference type="HAMAP-Rule" id="MF_00518"/>
    </source>
</evidence>
<proteinExistence type="inferred from homology"/>
<comment type="function">
    <text evidence="1">An aminoacyl-tRNA editing enzyme that deacylates mischarged D-aminoacyl-tRNAs. Also deacylates mischarged glycyl-tRNA(Ala), protecting cells against glycine mischarging by AlaRS. Acts via tRNA-based rather than protein-based catalysis; rejects L-amino acids rather than detecting D-amino acids in the active site. By recycling D-aminoacyl-tRNA to D-amino acids and free tRNA molecules, this enzyme counteracts the toxicity associated with the formation of D-aminoacyl-tRNA entities in vivo and helps enforce protein L-homochirality.</text>
</comment>
<comment type="catalytic activity">
    <reaction evidence="1">
        <text>glycyl-tRNA(Ala) + H2O = tRNA(Ala) + glycine + H(+)</text>
        <dbReference type="Rhea" id="RHEA:53744"/>
        <dbReference type="Rhea" id="RHEA-COMP:9657"/>
        <dbReference type="Rhea" id="RHEA-COMP:13640"/>
        <dbReference type="ChEBI" id="CHEBI:15377"/>
        <dbReference type="ChEBI" id="CHEBI:15378"/>
        <dbReference type="ChEBI" id="CHEBI:57305"/>
        <dbReference type="ChEBI" id="CHEBI:78442"/>
        <dbReference type="ChEBI" id="CHEBI:78522"/>
        <dbReference type="EC" id="3.1.1.96"/>
    </reaction>
</comment>
<comment type="catalytic activity">
    <reaction evidence="1">
        <text>a D-aminoacyl-tRNA + H2O = a tRNA + a D-alpha-amino acid + H(+)</text>
        <dbReference type="Rhea" id="RHEA:13953"/>
        <dbReference type="Rhea" id="RHEA-COMP:10123"/>
        <dbReference type="Rhea" id="RHEA-COMP:10124"/>
        <dbReference type="ChEBI" id="CHEBI:15377"/>
        <dbReference type="ChEBI" id="CHEBI:15378"/>
        <dbReference type="ChEBI" id="CHEBI:59871"/>
        <dbReference type="ChEBI" id="CHEBI:78442"/>
        <dbReference type="ChEBI" id="CHEBI:79333"/>
        <dbReference type="EC" id="3.1.1.96"/>
    </reaction>
</comment>
<comment type="subunit">
    <text evidence="1">Homodimer.</text>
</comment>
<comment type="subcellular location">
    <subcellularLocation>
        <location evidence="1">Cytoplasm</location>
    </subcellularLocation>
</comment>
<comment type="domain">
    <text evidence="1">A Gly-cisPro motif from one monomer fits into the active site of the other monomer to allow specific chiral rejection of L-amino acids.</text>
</comment>
<comment type="similarity">
    <text evidence="1">Belongs to the DTD family.</text>
</comment>
<keyword id="KW-0963">Cytoplasm</keyword>
<keyword id="KW-0378">Hydrolase</keyword>
<keyword id="KW-1185">Reference proteome</keyword>
<keyword id="KW-0694">RNA-binding</keyword>
<keyword id="KW-0820">tRNA-binding</keyword>
<feature type="chain" id="PRO_0000164570" description="D-aminoacyl-tRNA deacylase">
    <location>
        <begin position="1"/>
        <end position="145"/>
    </location>
</feature>
<feature type="short sequence motif" description="Gly-cisPro motif, important for rejection of L-amino acids" evidence="1">
    <location>
        <begin position="137"/>
        <end position="138"/>
    </location>
</feature>
<protein>
    <recommendedName>
        <fullName evidence="1">D-aminoacyl-tRNA deacylase</fullName>
        <shortName evidence="1">DTD</shortName>
        <ecNumber evidence="1">3.1.1.96</ecNumber>
    </recommendedName>
    <alternativeName>
        <fullName evidence="1">Gly-tRNA(Ala) deacylase</fullName>
    </alternativeName>
</protein>
<gene>
    <name evidence="1" type="primary">dtd</name>
    <name type="ordered locus">plu0242</name>
</gene>
<name>DTD_PHOLL</name>
<dbReference type="EC" id="3.1.1.96" evidence="1"/>
<dbReference type="EMBL" id="BX571859">
    <property type="protein sequence ID" value="CAE12537.1"/>
    <property type="molecule type" value="Genomic_DNA"/>
</dbReference>
<dbReference type="RefSeq" id="WP_011144641.1">
    <property type="nucleotide sequence ID" value="NC_005126.1"/>
</dbReference>
<dbReference type="SMR" id="Q7N9S2"/>
<dbReference type="STRING" id="243265.plu0242"/>
<dbReference type="GeneID" id="48846537"/>
<dbReference type="KEGG" id="plu:plu0242"/>
<dbReference type="eggNOG" id="COG1490">
    <property type="taxonomic scope" value="Bacteria"/>
</dbReference>
<dbReference type="HOGENOM" id="CLU_076901_1_0_6"/>
<dbReference type="OrthoDB" id="9801395at2"/>
<dbReference type="Proteomes" id="UP000002514">
    <property type="component" value="Chromosome"/>
</dbReference>
<dbReference type="GO" id="GO:0005737">
    <property type="term" value="C:cytoplasm"/>
    <property type="evidence" value="ECO:0007669"/>
    <property type="project" value="UniProtKB-SubCell"/>
</dbReference>
<dbReference type="GO" id="GO:0051500">
    <property type="term" value="F:D-tyrosyl-tRNA(Tyr) deacylase activity"/>
    <property type="evidence" value="ECO:0007669"/>
    <property type="project" value="TreeGrafter"/>
</dbReference>
<dbReference type="GO" id="GO:0106026">
    <property type="term" value="F:Gly-tRNA(Ala) deacylase activity"/>
    <property type="evidence" value="ECO:0007669"/>
    <property type="project" value="UniProtKB-UniRule"/>
</dbReference>
<dbReference type="GO" id="GO:0043908">
    <property type="term" value="F:Ser(Gly)-tRNA(Ala) hydrolase activity"/>
    <property type="evidence" value="ECO:0007669"/>
    <property type="project" value="UniProtKB-UniRule"/>
</dbReference>
<dbReference type="GO" id="GO:0000049">
    <property type="term" value="F:tRNA binding"/>
    <property type="evidence" value="ECO:0007669"/>
    <property type="project" value="UniProtKB-UniRule"/>
</dbReference>
<dbReference type="GO" id="GO:0019478">
    <property type="term" value="P:D-amino acid catabolic process"/>
    <property type="evidence" value="ECO:0007669"/>
    <property type="project" value="UniProtKB-UniRule"/>
</dbReference>
<dbReference type="CDD" id="cd00563">
    <property type="entry name" value="Dtyr_deacylase"/>
    <property type="match status" value="1"/>
</dbReference>
<dbReference type="FunFam" id="3.50.80.10:FF:000001">
    <property type="entry name" value="D-aminoacyl-tRNA deacylase"/>
    <property type="match status" value="1"/>
</dbReference>
<dbReference type="Gene3D" id="3.50.80.10">
    <property type="entry name" value="D-tyrosyl-tRNA(Tyr) deacylase"/>
    <property type="match status" value="1"/>
</dbReference>
<dbReference type="HAMAP" id="MF_00518">
    <property type="entry name" value="Deacylase_Dtd"/>
    <property type="match status" value="1"/>
</dbReference>
<dbReference type="InterPro" id="IPR003732">
    <property type="entry name" value="Daa-tRNA_deacyls_DTD"/>
</dbReference>
<dbReference type="InterPro" id="IPR023509">
    <property type="entry name" value="DTD-like_sf"/>
</dbReference>
<dbReference type="NCBIfam" id="TIGR00256">
    <property type="entry name" value="D-aminoacyl-tRNA deacylase"/>
    <property type="match status" value="1"/>
</dbReference>
<dbReference type="PANTHER" id="PTHR10472:SF5">
    <property type="entry name" value="D-AMINOACYL-TRNA DEACYLASE 1"/>
    <property type="match status" value="1"/>
</dbReference>
<dbReference type="PANTHER" id="PTHR10472">
    <property type="entry name" value="D-TYROSYL-TRNA TYR DEACYLASE"/>
    <property type="match status" value="1"/>
</dbReference>
<dbReference type="Pfam" id="PF02580">
    <property type="entry name" value="Tyr_Deacylase"/>
    <property type="match status" value="1"/>
</dbReference>
<dbReference type="SUPFAM" id="SSF69500">
    <property type="entry name" value="DTD-like"/>
    <property type="match status" value="1"/>
</dbReference>
<sequence length="145" mass="15962">MIALIQRVTQANVVVKNEVVGEIGHGLLVLLGVEKGDDQQKAKRLCEKVIGYRIFSDEQDKMNLNVQQIGGSLLVVSQFTLAADTQKGMRPSFSGGAAPDKADELYRYFVEQCRQSGVKTEIGRFAADMKVSLTNDGPVTFWLQV</sequence>